<keyword id="KW-0067">ATP-binding</keyword>
<keyword id="KW-0436">Ligase</keyword>
<keyword id="KW-0547">Nucleotide-binding</keyword>
<keyword id="KW-0648">Protein biosynthesis</keyword>
<keyword id="KW-1185">Reference proteome</keyword>
<protein>
    <recommendedName>
        <fullName evidence="1">Aspartyl/glutamyl-tRNA(Asn/Gln) amidotransferase subunit B</fullName>
        <shortName evidence="1">Asp/Glu-ADT subunit B</shortName>
        <ecNumber evidence="1">6.3.5.-</ecNumber>
    </recommendedName>
</protein>
<comment type="function">
    <text evidence="1">Allows the formation of correctly charged Asn-tRNA(Asn) or Gln-tRNA(Gln) through the transamidation of misacylated Asp-tRNA(Asn) or Glu-tRNA(Gln) in organisms which lack either or both of asparaginyl-tRNA or glutaminyl-tRNA synthetases. The reaction takes place in the presence of glutamine and ATP through an activated phospho-Asp-tRNA(Asn) or phospho-Glu-tRNA(Gln).</text>
</comment>
<comment type="catalytic activity">
    <reaction evidence="1">
        <text>L-glutamyl-tRNA(Gln) + L-glutamine + ATP + H2O = L-glutaminyl-tRNA(Gln) + L-glutamate + ADP + phosphate + H(+)</text>
        <dbReference type="Rhea" id="RHEA:17521"/>
        <dbReference type="Rhea" id="RHEA-COMP:9681"/>
        <dbReference type="Rhea" id="RHEA-COMP:9684"/>
        <dbReference type="ChEBI" id="CHEBI:15377"/>
        <dbReference type="ChEBI" id="CHEBI:15378"/>
        <dbReference type="ChEBI" id="CHEBI:29985"/>
        <dbReference type="ChEBI" id="CHEBI:30616"/>
        <dbReference type="ChEBI" id="CHEBI:43474"/>
        <dbReference type="ChEBI" id="CHEBI:58359"/>
        <dbReference type="ChEBI" id="CHEBI:78520"/>
        <dbReference type="ChEBI" id="CHEBI:78521"/>
        <dbReference type="ChEBI" id="CHEBI:456216"/>
    </reaction>
</comment>
<comment type="catalytic activity">
    <reaction evidence="1">
        <text>L-aspartyl-tRNA(Asn) + L-glutamine + ATP + H2O = L-asparaginyl-tRNA(Asn) + L-glutamate + ADP + phosphate + 2 H(+)</text>
        <dbReference type="Rhea" id="RHEA:14513"/>
        <dbReference type="Rhea" id="RHEA-COMP:9674"/>
        <dbReference type="Rhea" id="RHEA-COMP:9677"/>
        <dbReference type="ChEBI" id="CHEBI:15377"/>
        <dbReference type="ChEBI" id="CHEBI:15378"/>
        <dbReference type="ChEBI" id="CHEBI:29985"/>
        <dbReference type="ChEBI" id="CHEBI:30616"/>
        <dbReference type="ChEBI" id="CHEBI:43474"/>
        <dbReference type="ChEBI" id="CHEBI:58359"/>
        <dbReference type="ChEBI" id="CHEBI:78515"/>
        <dbReference type="ChEBI" id="CHEBI:78516"/>
        <dbReference type="ChEBI" id="CHEBI:456216"/>
    </reaction>
</comment>
<comment type="subunit">
    <text evidence="1">Heterotrimer of A, B and C subunits.</text>
</comment>
<comment type="similarity">
    <text evidence="1">Belongs to the GatB/GatE family. GatB subfamily.</text>
</comment>
<gene>
    <name evidence="1" type="primary">gatB</name>
    <name type="ordered locus">lmo1754</name>
</gene>
<dbReference type="EC" id="6.3.5.-" evidence="1"/>
<dbReference type="EMBL" id="AL591981">
    <property type="protein sequence ID" value="CAC99832.1"/>
    <property type="molecule type" value="Genomic_DNA"/>
</dbReference>
<dbReference type="PIR" id="AB1294">
    <property type="entry name" value="AB1294"/>
</dbReference>
<dbReference type="RefSeq" id="NP_465279.1">
    <property type="nucleotide sequence ID" value="NC_003210.1"/>
</dbReference>
<dbReference type="RefSeq" id="WP_003733249.1">
    <property type="nucleotide sequence ID" value="NZ_CP149495.1"/>
</dbReference>
<dbReference type="SMR" id="Q8Y6D3"/>
<dbReference type="STRING" id="169963.gene:17594436"/>
<dbReference type="PaxDb" id="169963-lmo1754"/>
<dbReference type="EnsemblBacteria" id="CAC99832">
    <property type="protein sequence ID" value="CAC99832"/>
    <property type="gene ID" value="CAC99832"/>
</dbReference>
<dbReference type="GeneID" id="985551"/>
<dbReference type="KEGG" id="lmo:lmo1754"/>
<dbReference type="PATRIC" id="fig|169963.11.peg.1798"/>
<dbReference type="eggNOG" id="COG0064">
    <property type="taxonomic scope" value="Bacteria"/>
</dbReference>
<dbReference type="HOGENOM" id="CLU_019240_0_0_9"/>
<dbReference type="OrthoDB" id="9804078at2"/>
<dbReference type="PhylomeDB" id="Q8Y6D3"/>
<dbReference type="BioCyc" id="LMON169963:LMO1754-MONOMER"/>
<dbReference type="Proteomes" id="UP000000817">
    <property type="component" value="Chromosome"/>
</dbReference>
<dbReference type="GO" id="GO:0050566">
    <property type="term" value="F:asparaginyl-tRNA synthase (glutamine-hydrolyzing) activity"/>
    <property type="evidence" value="ECO:0007669"/>
    <property type="project" value="RHEA"/>
</dbReference>
<dbReference type="GO" id="GO:0005524">
    <property type="term" value="F:ATP binding"/>
    <property type="evidence" value="ECO:0007669"/>
    <property type="project" value="UniProtKB-KW"/>
</dbReference>
<dbReference type="GO" id="GO:0050567">
    <property type="term" value="F:glutaminyl-tRNA synthase (glutamine-hydrolyzing) activity"/>
    <property type="evidence" value="ECO:0000318"/>
    <property type="project" value="GO_Central"/>
</dbReference>
<dbReference type="GO" id="GO:0070681">
    <property type="term" value="P:glutaminyl-tRNAGln biosynthesis via transamidation"/>
    <property type="evidence" value="ECO:0000318"/>
    <property type="project" value="GO_Central"/>
</dbReference>
<dbReference type="GO" id="GO:0006412">
    <property type="term" value="P:translation"/>
    <property type="evidence" value="ECO:0007669"/>
    <property type="project" value="UniProtKB-UniRule"/>
</dbReference>
<dbReference type="FunFam" id="1.10.10.410:FF:000001">
    <property type="entry name" value="Aspartyl/glutamyl-tRNA(Asn/Gln) amidotransferase subunit B"/>
    <property type="match status" value="1"/>
</dbReference>
<dbReference type="FunFam" id="1.10.150.380:FF:000001">
    <property type="entry name" value="Aspartyl/glutamyl-tRNA(Asn/Gln) amidotransferase subunit B"/>
    <property type="match status" value="1"/>
</dbReference>
<dbReference type="Gene3D" id="1.10.10.410">
    <property type="match status" value="1"/>
</dbReference>
<dbReference type="Gene3D" id="1.10.150.380">
    <property type="entry name" value="GatB domain, N-terminal subdomain"/>
    <property type="match status" value="1"/>
</dbReference>
<dbReference type="HAMAP" id="MF_00121">
    <property type="entry name" value="GatB"/>
    <property type="match status" value="1"/>
</dbReference>
<dbReference type="InterPro" id="IPR017959">
    <property type="entry name" value="Asn/Gln-tRNA_amidoTrfase_suB/E"/>
</dbReference>
<dbReference type="InterPro" id="IPR006075">
    <property type="entry name" value="Asn/Gln-tRNA_Trfase_suB/E_cat"/>
</dbReference>
<dbReference type="InterPro" id="IPR018027">
    <property type="entry name" value="Asn/Gln_amidotransferase"/>
</dbReference>
<dbReference type="InterPro" id="IPR003789">
    <property type="entry name" value="Asn/Gln_tRNA_amidoTrase-B-like"/>
</dbReference>
<dbReference type="InterPro" id="IPR004413">
    <property type="entry name" value="GatB"/>
</dbReference>
<dbReference type="InterPro" id="IPR042114">
    <property type="entry name" value="GatB_C_1"/>
</dbReference>
<dbReference type="InterPro" id="IPR023168">
    <property type="entry name" value="GatB_Yqey_C_2"/>
</dbReference>
<dbReference type="InterPro" id="IPR017958">
    <property type="entry name" value="Gln-tRNA_amidoTrfase_suB_CS"/>
</dbReference>
<dbReference type="InterPro" id="IPR014746">
    <property type="entry name" value="Gln_synth/guanido_kin_cat_dom"/>
</dbReference>
<dbReference type="NCBIfam" id="TIGR00133">
    <property type="entry name" value="gatB"/>
    <property type="match status" value="1"/>
</dbReference>
<dbReference type="NCBIfam" id="NF004011">
    <property type="entry name" value="PRK05477.1-1"/>
    <property type="match status" value="1"/>
</dbReference>
<dbReference type="NCBIfam" id="NF004012">
    <property type="entry name" value="PRK05477.1-2"/>
    <property type="match status" value="1"/>
</dbReference>
<dbReference type="NCBIfam" id="NF004014">
    <property type="entry name" value="PRK05477.1-4"/>
    <property type="match status" value="1"/>
</dbReference>
<dbReference type="PANTHER" id="PTHR11659">
    <property type="entry name" value="GLUTAMYL-TRNA GLN AMIDOTRANSFERASE SUBUNIT B MITOCHONDRIAL AND PROKARYOTIC PET112-RELATED"/>
    <property type="match status" value="1"/>
</dbReference>
<dbReference type="PANTHER" id="PTHR11659:SF0">
    <property type="entry name" value="GLUTAMYL-TRNA(GLN) AMIDOTRANSFERASE SUBUNIT B, MITOCHONDRIAL"/>
    <property type="match status" value="1"/>
</dbReference>
<dbReference type="Pfam" id="PF02934">
    <property type="entry name" value="GatB_N"/>
    <property type="match status" value="1"/>
</dbReference>
<dbReference type="Pfam" id="PF02637">
    <property type="entry name" value="GatB_Yqey"/>
    <property type="match status" value="1"/>
</dbReference>
<dbReference type="SMART" id="SM00845">
    <property type="entry name" value="GatB_Yqey"/>
    <property type="match status" value="1"/>
</dbReference>
<dbReference type="SUPFAM" id="SSF89095">
    <property type="entry name" value="GatB/YqeY motif"/>
    <property type="match status" value="1"/>
</dbReference>
<dbReference type="SUPFAM" id="SSF55931">
    <property type="entry name" value="Glutamine synthetase/guanido kinase"/>
    <property type="match status" value="1"/>
</dbReference>
<dbReference type="PROSITE" id="PS01234">
    <property type="entry name" value="GATB"/>
    <property type="match status" value="1"/>
</dbReference>
<accession>Q8Y6D3</accession>
<organism>
    <name type="scientific">Listeria monocytogenes serovar 1/2a (strain ATCC BAA-679 / EGD-e)</name>
    <dbReference type="NCBI Taxonomy" id="169963"/>
    <lineage>
        <taxon>Bacteria</taxon>
        <taxon>Bacillati</taxon>
        <taxon>Bacillota</taxon>
        <taxon>Bacilli</taxon>
        <taxon>Bacillales</taxon>
        <taxon>Listeriaceae</taxon>
        <taxon>Listeria</taxon>
    </lineage>
</organism>
<name>GATB_LISMO</name>
<reference key="1">
    <citation type="journal article" date="2001" name="Science">
        <title>Comparative genomics of Listeria species.</title>
        <authorList>
            <person name="Glaser P."/>
            <person name="Frangeul L."/>
            <person name="Buchrieser C."/>
            <person name="Rusniok C."/>
            <person name="Amend A."/>
            <person name="Baquero F."/>
            <person name="Berche P."/>
            <person name="Bloecker H."/>
            <person name="Brandt P."/>
            <person name="Chakraborty T."/>
            <person name="Charbit A."/>
            <person name="Chetouani F."/>
            <person name="Couve E."/>
            <person name="de Daruvar A."/>
            <person name="Dehoux P."/>
            <person name="Domann E."/>
            <person name="Dominguez-Bernal G."/>
            <person name="Duchaud E."/>
            <person name="Durant L."/>
            <person name="Dussurget O."/>
            <person name="Entian K.-D."/>
            <person name="Fsihi H."/>
            <person name="Garcia-del Portillo F."/>
            <person name="Garrido P."/>
            <person name="Gautier L."/>
            <person name="Goebel W."/>
            <person name="Gomez-Lopez N."/>
            <person name="Hain T."/>
            <person name="Hauf J."/>
            <person name="Jackson D."/>
            <person name="Jones L.-M."/>
            <person name="Kaerst U."/>
            <person name="Kreft J."/>
            <person name="Kuhn M."/>
            <person name="Kunst F."/>
            <person name="Kurapkat G."/>
            <person name="Madueno E."/>
            <person name="Maitournam A."/>
            <person name="Mata Vicente J."/>
            <person name="Ng E."/>
            <person name="Nedjari H."/>
            <person name="Nordsiek G."/>
            <person name="Novella S."/>
            <person name="de Pablos B."/>
            <person name="Perez-Diaz J.-C."/>
            <person name="Purcell R."/>
            <person name="Remmel B."/>
            <person name="Rose M."/>
            <person name="Schlueter T."/>
            <person name="Simoes N."/>
            <person name="Tierrez A."/>
            <person name="Vazquez-Boland J.-A."/>
            <person name="Voss H."/>
            <person name="Wehland J."/>
            <person name="Cossart P."/>
        </authorList>
    </citation>
    <scope>NUCLEOTIDE SEQUENCE [LARGE SCALE GENOMIC DNA]</scope>
    <source>
        <strain>ATCC BAA-679 / EGD-e</strain>
    </source>
</reference>
<sequence>MNFETVIGLEVHVELKTNSKIFSSAPAHFGAEPNTNTTVVDLGMPGVLPVLNKRAVEFGMKAAMAINCEIAEHTKFDRKNYFYPDNPKAYQISQFDKPIGEHGWIEIEVGGKKKKIGITRLHLEEDAGKNTHTSHGYSLVDINRQGTPLIEIVSEPDIRSAEEAYAYLEKLKSIIQYTGVSDVKMEEGSMRCDANISIRPIGQEEFGVKTELKNLNSFNNVRKGIEYEEKRQAEVLKSGGIIEQETRRFEEATGKTSLMRIKEGSDDYRYFPEPDLVDLFIDDAWKERIRAEIPELPDKRQIRYINDLGLPAYDAMVLTLTKEMSDFFEATLVAGADAKQASNWLMGEVSAYLNAEQKELHETGLTPENLAGMIKLIEAGTISSKIAKKVFRELAQNGGDAEQVVKDKGLVQISDEGALRTIISEILDNNEQSIVDFKNGKDRAVGFLVGQVMKATKGQANPPMVNKLLLEEMNKR</sequence>
<evidence type="ECO:0000255" key="1">
    <source>
        <dbReference type="HAMAP-Rule" id="MF_00121"/>
    </source>
</evidence>
<feature type="chain" id="PRO_0000148804" description="Aspartyl/glutamyl-tRNA(Asn/Gln) amidotransferase subunit B">
    <location>
        <begin position="1"/>
        <end position="476"/>
    </location>
</feature>
<proteinExistence type="inferred from homology"/>